<keyword id="KW-0963">Cytoplasm</keyword>
<keyword id="KW-0520">NAD</keyword>
<keyword id="KW-0560">Oxidoreductase</keyword>
<keyword id="KW-0664">Pyridoxine biosynthesis</keyword>
<organism>
    <name type="scientific">Salmonella paratyphi C (strain RKS4594)</name>
    <dbReference type="NCBI Taxonomy" id="476213"/>
    <lineage>
        <taxon>Bacteria</taxon>
        <taxon>Pseudomonadati</taxon>
        <taxon>Pseudomonadota</taxon>
        <taxon>Gammaproteobacteria</taxon>
        <taxon>Enterobacterales</taxon>
        <taxon>Enterobacteriaceae</taxon>
        <taxon>Salmonella</taxon>
    </lineage>
</organism>
<reference key="1">
    <citation type="journal article" date="2009" name="PLoS ONE">
        <title>Salmonella paratyphi C: genetic divergence from Salmonella choleraesuis and pathogenic convergence with Salmonella typhi.</title>
        <authorList>
            <person name="Liu W.-Q."/>
            <person name="Feng Y."/>
            <person name="Wang Y."/>
            <person name="Zou Q.-H."/>
            <person name="Chen F."/>
            <person name="Guo J.-T."/>
            <person name="Peng Y.-H."/>
            <person name="Jin Y."/>
            <person name="Li Y.-G."/>
            <person name="Hu S.-N."/>
            <person name="Johnston R.N."/>
            <person name="Liu G.-R."/>
            <person name="Liu S.-L."/>
        </authorList>
    </citation>
    <scope>NUCLEOTIDE SEQUENCE [LARGE SCALE GENOMIC DNA]</scope>
    <source>
        <strain>RKS4594</strain>
    </source>
</reference>
<comment type="function">
    <text evidence="1">Catalyzes the oxidation of erythronate-4-phosphate to 3-hydroxy-2-oxo-4-phosphonooxybutanoate.</text>
</comment>
<comment type="catalytic activity">
    <reaction evidence="1">
        <text>4-phospho-D-erythronate + NAD(+) = (R)-3-hydroxy-2-oxo-4-phosphooxybutanoate + NADH + H(+)</text>
        <dbReference type="Rhea" id="RHEA:18829"/>
        <dbReference type="ChEBI" id="CHEBI:15378"/>
        <dbReference type="ChEBI" id="CHEBI:57540"/>
        <dbReference type="ChEBI" id="CHEBI:57945"/>
        <dbReference type="ChEBI" id="CHEBI:58538"/>
        <dbReference type="ChEBI" id="CHEBI:58766"/>
        <dbReference type="EC" id="1.1.1.290"/>
    </reaction>
</comment>
<comment type="pathway">
    <text evidence="1">Cofactor biosynthesis; pyridoxine 5'-phosphate biosynthesis; pyridoxine 5'-phosphate from D-erythrose 4-phosphate: step 2/5.</text>
</comment>
<comment type="subunit">
    <text evidence="1">Homodimer.</text>
</comment>
<comment type="subcellular location">
    <subcellularLocation>
        <location evidence="1">Cytoplasm</location>
    </subcellularLocation>
</comment>
<comment type="similarity">
    <text evidence="1">Belongs to the D-isomer specific 2-hydroxyacid dehydrogenase family. PdxB subfamily.</text>
</comment>
<gene>
    <name evidence="1" type="primary">pdxB</name>
    <name type="ordered locus">SPC_1335</name>
</gene>
<protein>
    <recommendedName>
        <fullName evidence="1">Erythronate-4-phosphate dehydrogenase</fullName>
        <ecNumber evidence="1">1.1.1.290</ecNumber>
    </recommendedName>
</protein>
<evidence type="ECO:0000255" key="1">
    <source>
        <dbReference type="HAMAP-Rule" id="MF_01825"/>
    </source>
</evidence>
<sequence>MKILVDENMPYARELFSRLGEVKAVPGRPIPVEELNHADALMVRSVTKVNESLLSGTPINFVGTATAGTDHVDEAWLKQAGIGFSAAPGCNAIAVVEYVFSALLMLAERDGFSLRDRTIGIVGVGNVGSRLQTRLEALGIRTLLCDPPRAARGDEGDFRTLDELVQEADVLTFHTPLYKDGPYKTLHLADETLIRRLKPGAILINACRGPVVDNAALLARLNAGQPLSVVLDVWEGEPDLNVALLEAVDIGTSHIAGYTLEGKARGTTQVFEAYSAFIGREQRVALETLLPAPEFGRITLHGPLDQPTLKRLAHLVYDVRRDDAPLRKVAGIPGEFDKLRKNYLERREWSSLYVMCDDETAAALLCKLGFNAVHHPAH</sequence>
<dbReference type="EC" id="1.1.1.290" evidence="1"/>
<dbReference type="EMBL" id="CP000857">
    <property type="protein sequence ID" value="ACN45497.1"/>
    <property type="molecule type" value="Genomic_DNA"/>
</dbReference>
<dbReference type="RefSeq" id="WP_000699178.1">
    <property type="nucleotide sequence ID" value="NC_012125.1"/>
</dbReference>
<dbReference type="SMR" id="C0PZZ3"/>
<dbReference type="KEGG" id="sei:SPC_1335"/>
<dbReference type="HOGENOM" id="CLU_019796_4_0_6"/>
<dbReference type="UniPathway" id="UPA00244">
    <property type="reaction ID" value="UER00310"/>
</dbReference>
<dbReference type="Proteomes" id="UP000001599">
    <property type="component" value="Chromosome"/>
</dbReference>
<dbReference type="GO" id="GO:0005829">
    <property type="term" value="C:cytosol"/>
    <property type="evidence" value="ECO:0007669"/>
    <property type="project" value="TreeGrafter"/>
</dbReference>
<dbReference type="GO" id="GO:0033711">
    <property type="term" value="F:4-phosphoerythronate dehydrogenase activity"/>
    <property type="evidence" value="ECO:0007669"/>
    <property type="project" value="UniProtKB-EC"/>
</dbReference>
<dbReference type="GO" id="GO:0051287">
    <property type="term" value="F:NAD binding"/>
    <property type="evidence" value="ECO:0007669"/>
    <property type="project" value="InterPro"/>
</dbReference>
<dbReference type="GO" id="GO:0046983">
    <property type="term" value="F:protein dimerization activity"/>
    <property type="evidence" value="ECO:0007669"/>
    <property type="project" value="InterPro"/>
</dbReference>
<dbReference type="GO" id="GO:0036001">
    <property type="term" value="P:'de novo' pyridoxal 5'-phosphate biosynthetic process"/>
    <property type="evidence" value="ECO:0007669"/>
    <property type="project" value="TreeGrafter"/>
</dbReference>
<dbReference type="GO" id="GO:0008615">
    <property type="term" value="P:pyridoxine biosynthetic process"/>
    <property type="evidence" value="ECO:0007669"/>
    <property type="project" value="UniProtKB-UniRule"/>
</dbReference>
<dbReference type="CDD" id="cd12158">
    <property type="entry name" value="ErythrP_dh"/>
    <property type="match status" value="1"/>
</dbReference>
<dbReference type="FunFam" id="3.30.1370.170:FF:000001">
    <property type="entry name" value="Erythronate-4-phosphate dehydrogenase"/>
    <property type="match status" value="1"/>
</dbReference>
<dbReference type="FunFam" id="3.40.50.720:FF:000093">
    <property type="entry name" value="Erythronate-4-phosphate dehydrogenase"/>
    <property type="match status" value="1"/>
</dbReference>
<dbReference type="Gene3D" id="3.30.1370.170">
    <property type="match status" value="1"/>
</dbReference>
<dbReference type="Gene3D" id="3.40.50.720">
    <property type="entry name" value="NAD(P)-binding Rossmann-like Domain"/>
    <property type="match status" value="2"/>
</dbReference>
<dbReference type="HAMAP" id="MF_01825">
    <property type="entry name" value="PdxB"/>
    <property type="match status" value="1"/>
</dbReference>
<dbReference type="InterPro" id="IPR006139">
    <property type="entry name" value="D-isomer_2_OHA_DH_cat_dom"/>
</dbReference>
<dbReference type="InterPro" id="IPR029753">
    <property type="entry name" value="D-isomer_DH_CS"/>
</dbReference>
<dbReference type="InterPro" id="IPR029752">
    <property type="entry name" value="D-isomer_DH_CS1"/>
</dbReference>
<dbReference type="InterPro" id="IPR006140">
    <property type="entry name" value="D-isomer_DH_NAD-bd"/>
</dbReference>
<dbReference type="InterPro" id="IPR020921">
    <property type="entry name" value="Erythronate-4-P_DHase"/>
</dbReference>
<dbReference type="InterPro" id="IPR024531">
    <property type="entry name" value="Erythronate-4-P_DHase_dimer"/>
</dbReference>
<dbReference type="InterPro" id="IPR036291">
    <property type="entry name" value="NAD(P)-bd_dom_sf"/>
</dbReference>
<dbReference type="InterPro" id="IPR038251">
    <property type="entry name" value="PdxB_dimer_sf"/>
</dbReference>
<dbReference type="NCBIfam" id="NF001309">
    <property type="entry name" value="PRK00257.1"/>
    <property type="match status" value="1"/>
</dbReference>
<dbReference type="NCBIfam" id="NF011966">
    <property type="entry name" value="PRK15438.1"/>
    <property type="match status" value="1"/>
</dbReference>
<dbReference type="PANTHER" id="PTHR42938">
    <property type="entry name" value="FORMATE DEHYDROGENASE 1"/>
    <property type="match status" value="1"/>
</dbReference>
<dbReference type="PANTHER" id="PTHR42938:SF9">
    <property type="entry name" value="FORMATE DEHYDROGENASE 1"/>
    <property type="match status" value="1"/>
</dbReference>
<dbReference type="Pfam" id="PF00389">
    <property type="entry name" value="2-Hacid_dh"/>
    <property type="match status" value="1"/>
</dbReference>
<dbReference type="Pfam" id="PF02826">
    <property type="entry name" value="2-Hacid_dh_C"/>
    <property type="match status" value="1"/>
</dbReference>
<dbReference type="Pfam" id="PF11890">
    <property type="entry name" value="DUF3410"/>
    <property type="match status" value="1"/>
</dbReference>
<dbReference type="SUPFAM" id="SSF52283">
    <property type="entry name" value="Formate/glycerate dehydrogenase catalytic domain-like"/>
    <property type="match status" value="1"/>
</dbReference>
<dbReference type="SUPFAM" id="SSF51735">
    <property type="entry name" value="NAD(P)-binding Rossmann-fold domains"/>
    <property type="match status" value="1"/>
</dbReference>
<dbReference type="PROSITE" id="PS00065">
    <property type="entry name" value="D_2_HYDROXYACID_DH_1"/>
    <property type="match status" value="1"/>
</dbReference>
<dbReference type="PROSITE" id="PS00671">
    <property type="entry name" value="D_2_HYDROXYACID_DH_3"/>
    <property type="match status" value="1"/>
</dbReference>
<feature type="chain" id="PRO_1000188280" description="Erythronate-4-phosphate dehydrogenase">
    <location>
        <begin position="1"/>
        <end position="378"/>
    </location>
</feature>
<feature type="active site" evidence="1">
    <location>
        <position position="208"/>
    </location>
</feature>
<feature type="active site" evidence="1">
    <location>
        <position position="237"/>
    </location>
</feature>
<feature type="active site" description="Proton donor" evidence="1">
    <location>
        <position position="254"/>
    </location>
</feature>
<feature type="binding site" evidence="1">
    <location>
        <position position="45"/>
    </location>
    <ligand>
        <name>substrate</name>
    </ligand>
</feature>
<feature type="binding site" evidence="1">
    <location>
        <position position="66"/>
    </location>
    <ligand>
        <name>substrate</name>
    </ligand>
</feature>
<feature type="binding site" evidence="1">
    <location>
        <position position="146"/>
    </location>
    <ligand>
        <name>NAD(+)</name>
        <dbReference type="ChEBI" id="CHEBI:57540"/>
    </ligand>
</feature>
<feature type="binding site" evidence="1">
    <location>
        <position position="175"/>
    </location>
    <ligand>
        <name>NAD(+)</name>
        <dbReference type="ChEBI" id="CHEBI:57540"/>
    </ligand>
</feature>
<feature type="binding site" evidence="1">
    <location>
        <position position="232"/>
    </location>
    <ligand>
        <name>NAD(+)</name>
        <dbReference type="ChEBI" id="CHEBI:57540"/>
    </ligand>
</feature>
<feature type="binding site" evidence="1">
    <location>
        <position position="257"/>
    </location>
    <ligand>
        <name>NAD(+)</name>
        <dbReference type="ChEBI" id="CHEBI:57540"/>
    </ligand>
</feature>
<feature type="binding site" evidence="1">
    <location>
        <position position="258"/>
    </location>
    <ligand>
        <name>substrate</name>
    </ligand>
</feature>
<name>PDXB_SALPC</name>
<proteinExistence type="inferred from homology"/>
<accession>C0PZZ3</accession>